<comment type="function">
    <text evidence="1">Catalyzes the hydroxylation of L-kynurenine (L-Kyn) to form 3-hydroxy-L-kynurenine (L-3OHKyn). Required for synthesis of quinolinic acid.</text>
</comment>
<comment type="catalytic activity">
    <reaction evidence="1">
        <text>L-kynurenine + NADPH + O2 + H(+) = 3-hydroxy-L-kynurenine + NADP(+) + H2O</text>
        <dbReference type="Rhea" id="RHEA:20545"/>
        <dbReference type="ChEBI" id="CHEBI:15377"/>
        <dbReference type="ChEBI" id="CHEBI:15378"/>
        <dbReference type="ChEBI" id="CHEBI:15379"/>
        <dbReference type="ChEBI" id="CHEBI:57783"/>
        <dbReference type="ChEBI" id="CHEBI:57959"/>
        <dbReference type="ChEBI" id="CHEBI:58125"/>
        <dbReference type="ChEBI" id="CHEBI:58349"/>
        <dbReference type="EC" id="1.14.13.9"/>
    </reaction>
</comment>
<comment type="cofactor">
    <cofactor evidence="1">
        <name>FAD</name>
        <dbReference type="ChEBI" id="CHEBI:57692"/>
    </cofactor>
</comment>
<comment type="pathway">
    <text evidence="1">Cofactor biosynthesis; NAD(+) biosynthesis; quinolinate from L-kynurenine: step 1/3.</text>
</comment>
<comment type="similarity">
    <text evidence="1">Belongs to the aromatic-ring hydroxylase family. KMO subfamily.</text>
</comment>
<accession>Q8PM34</accession>
<organism>
    <name type="scientific">Xanthomonas axonopodis pv. citri (strain 306)</name>
    <dbReference type="NCBI Taxonomy" id="190486"/>
    <lineage>
        <taxon>Bacteria</taxon>
        <taxon>Pseudomonadati</taxon>
        <taxon>Pseudomonadota</taxon>
        <taxon>Gammaproteobacteria</taxon>
        <taxon>Lysobacterales</taxon>
        <taxon>Lysobacteraceae</taxon>
        <taxon>Xanthomonas</taxon>
    </lineage>
</organism>
<gene>
    <name evidence="1" type="primary">kmo</name>
    <name type="ordered locus">XAC1600</name>
</gene>
<proteinExistence type="inferred from homology"/>
<keyword id="KW-0274">FAD</keyword>
<keyword id="KW-0285">Flavoprotein</keyword>
<keyword id="KW-0503">Monooxygenase</keyword>
<keyword id="KW-0521">NADP</keyword>
<keyword id="KW-0560">Oxidoreductase</keyword>
<keyword id="KW-0662">Pyridine nucleotide biosynthesis</keyword>
<name>KMO_XANAC</name>
<feature type="chain" id="PRO_0000361946" description="Kynurenine 3-monooxygenase">
    <location>
        <begin position="1"/>
        <end position="455"/>
    </location>
</feature>
<evidence type="ECO:0000255" key="1">
    <source>
        <dbReference type="HAMAP-Rule" id="MF_01971"/>
    </source>
</evidence>
<sequence>MSPVSQRSLTLIGAGLAGCLLAILLSRRGWQVTVYERRGDPRIKGYESGRSINLALAERGRHALRQAGAEDAVMAKAVMMRGRMVHPLVGQPQLQRYGRDDSEVIWSIHRAALNVALLDLAEQAGARVHFYRRLHTVDFDAGYARFIDDRDDQPHEIHFQSLIGSDGAGSALRAAMQRKSPLGERTEFLDHSYKELEIPPQPGGGFRIEGNALHIWPRGRYMCIALPNDGGTFTVTLFLPNAGEPSFATTRTGDEAFALFARDFPDALPLIPQLKEHWEEHPPGLLGTLTLDRWHLDGRALLIGDAAHAMVPFHGQGMNCAFEDCVALADQLDAHDDLASAFAAFEAARRDDAAAIQQMALENYLEMRDRVDDPDFLLQRELEQQLQARWPTRFVPHYTMVTFLRTRYSIALARSEIQREILVQATRGHSDLSRIDWSALEAVVHARLEPLDGAH</sequence>
<reference key="1">
    <citation type="journal article" date="2002" name="Nature">
        <title>Comparison of the genomes of two Xanthomonas pathogens with differing host specificities.</title>
        <authorList>
            <person name="da Silva A.C.R."/>
            <person name="Ferro J.A."/>
            <person name="Reinach F.C."/>
            <person name="Farah C.S."/>
            <person name="Furlan L.R."/>
            <person name="Quaggio R.B."/>
            <person name="Monteiro-Vitorello C.B."/>
            <person name="Van Sluys M.A."/>
            <person name="Almeida N.F. Jr."/>
            <person name="Alves L.M.C."/>
            <person name="do Amaral A.M."/>
            <person name="Bertolini M.C."/>
            <person name="Camargo L.E.A."/>
            <person name="Camarotte G."/>
            <person name="Cannavan F."/>
            <person name="Cardozo J."/>
            <person name="Chambergo F."/>
            <person name="Ciapina L.P."/>
            <person name="Cicarelli R.M.B."/>
            <person name="Coutinho L.L."/>
            <person name="Cursino-Santos J.R."/>
            <person name="El-Dorry H."/>
            <person name="Faria J.B."/>
            <person name="Ferreira A.J.S."/>
            <person name="Ferreira R.C.C."/>
            <person name="Ferro M.I.T."/>
            <person name="Formighieri E.F."/>
            <person name="Franco M.C."/>
            <person name="Greggio C.C."/>
            <person name="Gruber A."/>
            <person name="Katsuyama A.M."/>
            <person name="Kishi L.T."/>
            <person name="Leite R.P."/>
            <person name="Lemos E.G.M."/>
            <person name="Lemos M.V.F."/>
            <person name="Locali E.C."/>
            <person name="Machado M.A."/>
            <person name="Madeira A.M.B.N."/>
            <person name="Martinez-Rossi N.M."/>
            <person name="Martins E.C."/>
            <person name="Meidanis J."/>
            <person name="Menck C.F.M."/>
            <person name="Miyaki C.Y."/>
            <person name="Moon D.H."/>
            <person name="Moreira L.M."/>
            <person name="Novo M.T.M."/>
            <person name="Okura V.K."/>
            <person name="Oliveira M.C."/>
            <person name="Oliveira V.R."/>
            <person name="Pereira H.A."/>
            <person name="Rossi A."/>
            <person name="Sena J.A.D."/>
            <person name="Silva C."/>
            <person name="de Souza R.F."/>
            <person name="Spinola L.A.F."/>
            <person name="Takita M.A."/>
            <person name="Tamura R.E."/>
            <person name="Teixeira E.C."/>
            <person name="Tezza R.I.D."/>
            <person name="Trindade dos Santos M."/>
            <person name="Truffi D."/>
            <person name="Tsai S.M."/>
            <person name="White F.F."/>
            <person name="Setubal J.C."/>
            <person name="Kitajima J.P."/>
        </authorList>
    </citation>
    <scope>NUCLEOTIDE SEQUENCE [LARGE SCALE GENOMIC DNA]</scope>
    <source>
        <strain>306</strain>
    </source>
</reference>
<dbReference type="EC" id="1.14.13.9" evidence="1"/>
<dbReference type="EMBL" id="AE008923">
    <property type="protein sequence ID" value="AAM36468.1"/>
    <property type="molecule type" value="Genomic_DNA"/>
</dbReference>
<dbReference type="RefSeq" id="WP_003485915.1">
    <property type="nucleotide sequence ID" value="NC_003919.1"/>
</dbReference>
<dbReference type="SMR" id="Q8PM34"/>
<dbReference type="KEGG" id="xac:XAC1600"/>
<dbReference type="eggNOG" id="COG0654">
    <property type="taxonomic scope" value="Bacteria"/>
</dbReference>
<dbReference type="HOGENOM" id="CLU_023210_0_1_6"/>
<dbReference type="UniPathway" id="UPA00253">
    <property type="reaction ID" value="UER00328"/>
</dbReference>
<dbReference type="Proteomes" id="UP000000576">
    <property type="component" value="Chromosome"/>
</dbReference>
<dbReference type="GO" id="GO:0071949">
    <property type="term" value="F:FAD binding"/>
    <property type="evidence" value="ECO:0007669"/>
    <property type="project" value="InterPro"/>
</dbReference>
<dbReference type="GO" id="GO:0004502">
    <property type="term" value="F:kynurenine 3-monooxygenase activity"/>
    <property type="evidence" value="ECO:0007669"/>
    <property type="project" value="UniProtKB-UniRule"/>
</dbReference>
<dbReference type="GO" id="GO:0043420">
    <property type="term" value="P:anthranilate metabolic process"/>
    <property type="evidence" value="ECO:0007669"/>
    <property type="project" value="UniProtKB-UniRule"/>
</dbReference>
<dbReference type="GO" id="GO:0070189">
    <property type="term" value="P:kynurenine metabolic process"/>
    <property type="evidence" value="ECO:0007669"/>
    <property type="project" value="TreeGrafter"/>
</dbReference>
<dbReference type="GO" id="GO:0006569">
    <property type="term" value="P:L-tryptophan catabolic process"/>
    <property type="evidence" value="ECO:0007669"/>
    <property type="project" value="UniProtKB-UniRule"/>
</dbReference>
<dbReference type="GO" id="GO:0009435">
    <property type="term" value="P:NAD biosynthetic process"/>
    <property type="evidence" value="ECO:0007669"/>
    <property type="project" value="UniProtKB-UniPathway"/>
</dbReference>
<dbReference type="GO" id="GO:0019805">
    <property type="term" value="P:quinolinate biosynthetic process"/>
    <property type="evidence" value="ECO:0007669"/>
    <property type="project" value="UniProtKB-UniRule"/>
</dbReference>
<dbReference type="FunFam" id="3.50.50.60:FF:000185">
    <property type="entry name" value="Kynurenine 3-monooxygenase"/>
    <property type="match status" value="1"/>
</dbReference>
<dbReference type="Gene3D" id="3.50.50.60">
    <property type="entry name" value="FAD/NAD(P)-binding domain"/>
    <property type="match status" value="1"/>
</dbReference>
<dbReference type="HAMAP" id="MF_01971">
    <property type="entry name" value="Kynurenine_monooxygenase"/>
    <property type="match status" value="1"/>
</dbReference>
<dbReference type="InterPro" id="IPR002938">
    <property type="entry name" value="FAD-bd"/>
</dbReference>
<dbReference type="InterPro" id="IPR036188">
    <property type="entry name" value="FAD/NAD-bd_sf"/>
</dbReference>
<dbReference type="InterPro" id="IPR027545">
    <property type="entry name" value="Kynurenine_monooxygenase"/>
</dbReference>
<dbReference type="PANTHER" id="PTHR46028">
    <property type="entry name" value="KYNURENINE 3-MONOOXYGENASE"/>
    <property type="match status" value="1"/>
</dbReference>
<dbReference type="PANTHER" id="PTHR46028:SF2">
    <property type="entry name" value="KYNURENINE 3-MONOOXYGENASE"/>
    <property type="match status" value="1"/>
</dbReference>
<dbReference type="Pfam" id="PF01494">
    <property type="entry name" value="FAD_binding_3"/>
    <property type="match status" value="1"/>
</dbReference>
<dbReference type="PRINTS" id="PR00420">
    <property type="entry name" value="RNGMNOXGNASE"/>
</dbReference>
<dbReference type="SUPFAM" id="SSF51905">
    <property type="entry name" value="FAD/NAD(P)-binding domain"/>
    <property type="match status" value="1"/>
</dbReference>
<protein>
    <recommendedName>
        <fullName evidence="1">Kynurenine 3-monooxygenase</fullName>
        <ecNumber evidence="1">1.14.13.9</ecNumber>
    </recommendedName>
    <alternativeName>
        <fullName evidence="1">Kynurenine 3-hydroxylase</fullName>
    </alternativeName>
</protein>